<reference key="1">
    <citation type="journal article" date="1999" name="Nature">
        <title>Genomic sequence comparison of two unrelated isolates of the human gastric pathogen Helicobacter pylori.</title>
        <authorList>
            <person name="Alm R.A."/>
            <person name="Ling L.-S.L."/>
            <person name="Moir D.T."/>
            <person name="King B.L."/>
            <person name="Brown E.D."/>
            <person name="Doig P.C."/>
            <person name="Smith D.R."/>
            <person name="Noonan B."/>
            <person name="Guild B.C."/>
            <person name="deJonge B.L."/>
            <person name="Carmel G."/>
            <person name="Tummino P.J."/>
            <person name="Caruso A."/>
            <person name="Uria-Nickelsen M."/>
            <person name="Mills D.M."/>
            <person name="Ives C."/>
            <person name="Gibson R."/>
            <person name="Merberg D."/>
            <person name="Mills S.D."/>
            <person name="Jiang Q."/>
            <person name="Taylor D.E."/>
            <person name="Vovis G.F."/>
            <person name="Trust T.J."/>
        </authorList>
    </citation>
    <scope>NUCLEOTIDE SEQUENCE [LARGE SCALE GENOMIC DNA]</scope>
    <source>
        <strain>J99 / ATCC 700824</strain>
    </source>
</reference>
<feature type="chain" id="PRO_0000272998" description="Flagellar assembly factor FliW 2">
    <location>
        <begin position="1"/>
        <end position="129"/>
    </location>
</feature>
<comment type="function">
    <text evidence="1">Acts as an anti-CsrA protein, binds CsrA and prevents it from repressing translation of its target genes, one of which is flagellin. Binds to flagellin and participates in the assembly of the flagellum.</text>
</comment>
<comment type="subunit">
    <text evidence="1">Interacts with translational regulator CsrA and flagellin(s).</text>
</comment>
<comment type="subcellular location">
    <subcellularLocation>
        <location evidence="1">Cytoplasm</location>
    </subcellularLocation>
</comment>
<comment type="similarity">
    <text evidence="1">Belongs to the FliW family.</text>
</comment>
<evidence type="ECO:0000255" key="1">
    <source>
        <dbReference type="HAMAP-Rule" id="MF_01185"/>
    </source>
</evidence>
<name>FLIW2_HELPJ</name>
<sequence>MIFDVKAPILGFETIHKMHLQKIDEIFLRLNSAEDNSVVSFTLVNPFALRKYEFEVPTPLKILLELEGAKSVLVANIMVVQTPIELSTVNYLAPLIFNLDKQLMGQVVLDSKKYPHYHLRENILSHTHE</sequence>
<accession>Q9ZJL5</accession>
<gene>
    <name evidence="1" type="primary">fliW2</name>
    <name type="ordered locus">jhp_1291</name>
</gene>
<protein>
    <recommendedName>
        <fullName evidence="1">Flagellar assembly factor FliW 2</fullName>
    </recommendedName>
</protein>
<proteinExistence type="inferred from homology"/>
<organism>
    <name type="scientific">Helicobacter pylori (strain J99 / ATCC 700824)</name>
    <name type="common">Campylobacter pylori J99</name>
    <dbReference type="NCBI Taxonomy" id="85963"/>
    <lineage>
        <taxon>Bacteria</taxon>
        <taxon>Pseudomonadati</taxon>
        <taxon>Campylobacterota</taxon>
        <taxon>Epsilonproteobacteria</taxon>
        <taxon>Campylobacterales</taxon>
        <taxon>Helicobacteraceae</taxon>
        <taxon>Helicobacter</taxon>
    </lineage>
</organism>
<dbReference type="EMBL" id="AE001439">
    <property type="protein sequence ID" value="AAD06873.1"/>
    <property type="molecule type" value="Genomic_DNA"/>
</dbReference>
<dbReference type="PIR" id="G71824">
    <property type="entry name" value="G71824"/>
</dbReference>
<dbReference type="RefSeq" id="WP_010882626.1">
    <property type="nucleotide sequence ID" value="NC_000921.1"/>
</dbReference>
<dbReference type="SMR" id="Q9ZJL5"/>
<dbReference type="KEGG" id="hpj:jhp_1291"/>
<dbReference type="PATRIC" id="fig|85963.30.peg.1276"/>
<dbReference type="eggNOG" id="COG1699">
    <property type="taxonomic scope" value="Bacteria"/>
</dbReference>
<dbReference type="Proteomes" id="UP000000804">
    <property type="component" value="Chromosome"/>
</dbReference>
<dbReference type="GO" id="GO:0005737">
    <property type="term" value="C:cytoplasm"/>
    <property type="evidence" value="ECO:0007669"/>
    <property type="project" value="UniProtKB-SubCell"/>
</dbReference>
<dbReference type="GO" id="GO:0044780">
    <property type="term" value="P:bacterial-type flagellum assembly"/>
    <property type="evidence" value="ECO:0007669"/>
    <property type="project" value="UniProtKB-UniRule"/>
</dbReference>
<dbReference type="GO" id="GO:0006417">
    <property type="term" value="P:regulation of translation"/>
    <property type="evidence" value="ECO:0007669"/>
    <property type="project" value="UniProtKB-KW"/>
</dbReference>
<dbReference type="Gene3D" id="2.30.290.10">
    <property type="entry name" value="BH3618-like"/>
    <property type="match status" value="1"/>
</dbReference>
<dbReference type="HAMAP" id="MF_01185">
    <property type="entry name" value="FliW"/>
    <property type="match status" value="1"/>
</dbReference>
<dbReference type="InterPro" id="IPR003775">
    <property type="entry name" value="Flagellar_assembly_factor_FliW"/>
</dbReference>
<dbReference type="InterPro" id="IPR024046">
    <property type="entry name" value="Flagellar_assmbl_FliW_dom_sf"/>
</dbReference>
<dbReference type="NCBIfam" id="NF009790">
    <property type="entry name" value="PRK13282.1"/>
    <property type="match status" value="1"/>
</dbReference>
<dbReference type="PANTHER" id="PTHR39190">
    <property type="entry name" value="FLAGELLAR ASSEMBLY FACTOR FLIW"/>
    <property type="match status" value="1"/>
</dbReference>
<dbReference type="PANTHER" id="PTHR39190:SF1">
    <property type="entry name" value="FLAGELLAR ASSEMBLY FACTOR FLIW"/>
    <property type="match status" value="1"/>
</dbReference>
<dbReference type="Pfam" id="PF02623">
    <property type="entry name" value="FliW"/>
    <property type="match status" value="1"/>
</dbReference>
<dbReference type="SUPFAM" id="SSF141457">
    <property type="entry name" value="BH3618-like"/>
    <property type="match status" value="1"/>
</dbReference>
<keyword id="KW-1005">Bacterial flagellum biogenesis</keyword>
<keyword id="KW-0143">Chaperone</keyword>
<keyword id="KW-0963">Cytoplasm</keyword>
<keyword id="KW-0810">Translation regulation</keyword>